<keyword id="KW-0067">ATP-binding</keyword>
<keyword id="KW-0418">Kinase</keyword>
<keyword id="KW-0547">Nucleotide-binding</keyword>
<keyword id="KW-0723">Serine/threonine-protein kinase</keyword>
<keyword id="KW-0808">Transferase</keyword>
<feature type="chain" id="PRO_1000130814" description="Serine-protein kinase RsbW">
    <location>
        <begin position="1"/>
        <end position="160"/>
    </location>
</feature>
<sequence length="160" mass="18241">MMERFEKIEMKIPAKAEYVAIIRLTMAGVANRMGFAYDDIEDMKIAISEACTNIVQHAYKEDVGEIAIVFGLYENRLEIMVADNGVSFDFNNLRSKVGPYDISKPVEHLPENGLGLYLINTLMDDIQIMHDEGMTVLMTKYIQREQVENDGNPISTYESY</sequence>
<organism>
    <name type="scientific">Bacillus cereus (strain AH820)</name>
    <dbReference type="NCBI Taxonomy" id="405535"/>
    <lineage>
        <taxon>Bacteria</taxon>
        <taxon>Bacillati</taxon>
        <taxon>Bacillota</taxon>
        <taxon>Bacilli</taxon>
        <taxon>Bacillales</taxon>
        <taxon>Bacillaceae</taxon>
        <taxon>Bacillus</taxon>
        <taxon>Bacillus cereus group</taxon>
    </lineage>
</organism>
<gene>
    <name evidence="1" type="primary">rsbW</name>
    <name type="ordered locus">BCAH820_1067</name>
</gene>
<protein>
    <recommendedName>
        <fullName evidence="1">Serine-protein kinase RsbW</fullName>
        <ecNumber evidence="1">2.7.11.1</ecNumber>
    </recommendedName>
    <alternativeName>
        <fullName evidence="1">Anti-sigma-B factor</fullName>
    </alternativeName>
    <alternativeName>
        <fullName evidence="1">Sigma-B negative effector RsbW</fullName>
    </alternativeName>
</protein>
<dbReference type="EC" id="2.7.11.1" evidence="1"/>
<dbReference type="EMBL" id="CP001283">
    <property type="protein sequence ID" value="ACK89541.1"/>
    <property type="molecule type" value="Genomic_DNA"/>
</dbReference>
<dbReference type="RefSeq" id="WP_000970578.1">
    <property type="nucleotide sequence ID" value="NC_011773.1"/>
</dbReference>
<dbReference type="SMR" id="B7JCS0"/>
<dbReference type="GeneID" id="45021033"/>
<dbReference type="KEGG" id="bcu:BCAH820_1067"/>
<dbReference type="HOGENOM" id="CLU_090336_11_1_9"/>
<dbReference type="Proteomes" id="UP000001363">
    <property type="component" value="Chromosome"/>
</dbReference>
<dbReference type="GO" id="GO:0005524">
    <property type="term" value="F:ATP binding"/>
    <property type="evidence" value="ECO:0007669"/>
    <property type="project" value="UniProtKB-KW"/>
</dbReference>
<dbReference type="GO" id="GO:0106310">
    <property type="term" value="F:protein serine kinase activity"/>
    <property type="evidence" value="ECO:0007669"/>
    <property type="project" value="RHEA"/>
</dbReference>
<dbReference type="GO" id="GO:0004674">
    <property type="term" value="F:protein serine/threonine kinase activity"/>
    <property type="evidence" value="ECO:0007669"/>
    <property type="project" value="UniProtKB-KW"/>
</dbReference>
<dbReference type="GO" id="GO:0016989">
    <property type="term" value="F:sigma factor antagonist activity"/>
    <property type="evidence" value="ECO:0007669"/>
    <property type="project" value="InterPro"/>
</dbReference>
<dbReference type="CDD" id="cd16936">
    <property type="entry name" value="HATPase_RsbW-like"/>
    <property type="match status" value="1"/>
</dbReference>
<dbReference type="FunFam" id="3.30.565.10:FF:000026">
    <property type="entry name" value="Serine-protein kinase RsbW"/>
    <property type="match status" value="1"/>
</dbReference>
<dbReference type="Gene3D" id="3.30.565.10">
    <property type="entry name" value="Histidine kinase-like ATPase, C-terminal domain"/>
    <property type="match status" value="1"/>
</dbReference>
<dbReference type="HAMAP" id="MF_00638">
    <property type="entry name" value="Anti_sigma_B"/>
    <property type="match status" value="1"/>
</dbReference>
<dbReference type="InterPro" id="IPR050267">
    <property type="entry name" value="Anti-sigma-factor_SerPK"/>
</dbReference>
<dbReference type="InterPro" id="IPR036890">
    <property type="entry name" value="HATPase_C_sf"/>
</dbReference>
<dbReference type="InterPro" id="IPR010193">
    <property type="entry name" value="RsbW"/>
</dbReference>
<dbReference type="NCBIfam" id="NF003144">
    <property type="entry name" value="PRK04069.1"/>
    <property type="match status" value="1"/>
</dbReference>
<dbReference type="NCBIfam" id="TIGR01924">
    <property type="entry name" value="rsbW_low_gc"/>
    <property type="match status" value="1"/>
</dbReference>
<dbReference type="PANTHER" id="PTHR35526">
    <property type="entry name" value="ANTI-SIGMA-F FACTOR RSBW-RELATED"/>
    <property type="match status" value="1"/>
</dbReference>
<dbReference type="PANTHER" id="PTHR35526:SF9">
    <property type="entry name" value="SERINE-PROTEIN KINASE RSBW"/>
    <property type="match status" value="1"/>
</dbReference>
<dbReference type="Pfam" id="PF13581">
    <property type="entry name" value="HATPase_c_2"/>
    <property type="match status" value="1"/>
</dbReference>
<dbReference type="SUPFAM" id="SSF55874">
    <property type="entry name" value="ATPase domain of HSP90 chaperone/DNA topoisomerase II/histidine kinase"/>
    <property type="match status" value="1"/>
</dbReference>
<reference key="1">
    <citation type="submission" date="2008-10" db="EMBL/GenBank/DDBJ databases">
        <title>Genome sequence of Bacillus cereus AH820.</title>
        <authorList>
            <person name="Dodson R.J."/>
            <person name="Durkin A.S."/>
            <person name="Rosovitz M.J."/>
            <person name="Rasko D.A."/>
            <person name="Hoffmaster A."/>
            <person name="Ravel J."/>
            <person name="Sutton G."/>
        </authorList>
    </citation>
    <scope>NUCLEOTIDE SEQUENCE [LARGE SCALE GENOMIC DNA]</scope>
    <source>
        <strain>AH820</strain>
    </source>
</reference>
<evidence type="ECO:0000255" key="1">
    <source>
        <dbReference type="HAMAP-Rule" id="MF_00638"/>
    </source>
</evidence>
<name>RSBW_BACC0</name>
<comment type="function">
    <text evidence="1">Negative regulator of sigma-B activity. Phosphorylates and inactivates its specific antagonist protein, RsbV. Upon phosphorylation of RsbV, RsbW is released and binds to sigma-B, thereby blocking its ability to form an RNA polymerase holoenzyme (E-sigma-B).</text>
</comment>
<comment type="catalytic activity">
    <reaction evidence="1">
        <text>L-seryl-[protein] + ATP = O-phospho-L-seryl-[protein] + ADP + H(+)</text>
        <dbReference type="Rhea" id="RHEA:17989"/>
        <dbReference type="Rhea" id="RHEA-COMP:9863"/>
        <dbReference type="Rhea" id="RHEA-COMP:11604"/>
        <dbReference type="ChEBI" id="CHEBI:15378"/>
        <dbReference type="ChEBI" id="CHEBI:29999"/>
        <dbReference type="ChEBI" id="CHEBI:30616"/>
        <dbReference type="ChEBI" id="CHEBI:83421"/>
        <dbReference type="ChEBI" id="CHEBI:456216"/>
        <dbReference type="EC" id="2.7.11.1"/>
    </reaction>
</comment>
<comment type="catalytic activity">
    <reaction evidence="1">
        <text>L-threonyl-[protein] + ATP = O-phospho-L-threonyl-[protein] + ADP + H(+)</text>
        <dbReference type="Rhea" id="RHEA:46608"/>
        <dbReference type="Rhea" id="RHEA-COMP:11060"/>
        <dbReference type="Rhea" id="RHEA-COMP:11605"/>
        <dbReference type="ChEBI" id="CHEBI:15378"/>
        <dbReference type="ChEBI" id="CHEBI:30013"/>
        <dbReference type="ChEBI" id="CHEBI:30616"/>
        <dbReference type="ChEBI" id="CHEBI:61977"/>
        <dbReference type="ChEBI" id="CHEBI:456216"/>
        <dbReference type="EC" id="2.7.11.1"/>
    </reaction>
</comment>
<comment type="similarity">
    <text evidence="1">Belongs to the anti-sigma-factor family.</text>
</comment>
<accession>B7JCS0</accession>
<proteinExistence type="inferred from homology"/>